<evidence type="ECO:0000255" key="1">
    <source>
        <dbReference type="HAMAP-Rule" id="MF_00017"/>
    </source>
</evidence>
<evidence type="ECO:0000305" key="2"/>
<dbReference type="EMBL" id="AE008917">
    <property type="protein sequence ID" value="AAL53091.1"/>
    <property type="status" value="ALT_INIT"/>
    <property type="molecule type" value="Genomic_DNA"/>
</dbReference>
<dbReference type="PIR" id="AH3490">
    <property type="entry name" value="AH3490"/>
</dbReference>
<dbReference type="RefSeq" id="WP_004684611.1">
    <property type="nucleotide sequence ID" value="NZ_GG703778.1"/>
</dbReference>
<dbReference type="SMR" id="Q8YEG8"/>
<dbReference type="GeneID" id="29594792"/>
<dbReference type="KEGG" id="bme:BMEI1910"/>
<dbReference type="KEGG" id="bmel:DK63_1579"/>
<dbReference type="PATRIC" id="fig|224914.52.peg.1666"/>
<dbReference type="eggNOG" id="COG0353">
    <property type="taxonomic scope" value="Bacteria"/>
</dbReference>
<dbReference type="PhylomeDB" id="Q8YEG8"/>
<dbReference type="Proteomes" id="UP000000419">
    <property type="component" value="Chromosome I"/>
</dbReference>
<dbReference type="GO" id="GO:0003677">
    <property type="term" value="F:DNA binding"/>
    <property type="evidence" value="ECO:0007669"/>
    <property type="project" value="UniProtKB-UniRule"/>
</dbReference>
<dbReference type="GO" id="GO:0008270">
    <property type="term" value="F:zinc ion binding"/>
    <property type="evidence" value="ECO:0007669"/>
    <property type="project" value="UniProtKB-KW"/>
</dbReference>
<dbReference type="GO" id="GO:0006310">
    <property type="term" value="P:DNA recombination"/>
    <property type="evidence" value="ECO:0007669"/>
    <property type="project" value="UniProtKB-UniRule"/>
</dbReference>
<dbReference type="GO" id="GO:0006281">
    <property type="term" value="P:DNA repair"/>
    <property type="evidence" value="ECO:0007669"/>
    <property type="project" value="UniProtKB-UniRule"/>
</dbReference>
<dbReference type="CDD" id="cd01025">
    <property type="entry name" value="TOPRIM_recR"/>
    <property type="match status" value="1"/>
</dbReference>
<dbReference type="Gene3D" id="3.40.1360.10">
    <property type="match status" value="1"/>
</dbReference>
<dbReference type="Gene3D" id="6.10.250.240">
    <property type="match status" value="1"/>
</dbReference>
<dbReference type="Gene3D" id="1.10.8.420">
    <property type="entry name" value="RecR Domain 1"/>
    <property type="match status" value="1"/>
</dbReference>
<dbReference type="HAMAP" id="MF_00017">
    <property type="entry name" value="RecR"/>
    <property type="match status" value="1"/>
</dbReference>
<dbReference type="InterPro" id="IPR000093">
    <property type="entry name" value="DNA_Rcmb_RecR"/>
</dbReference>
<dbReference type="InterPro" id="IPR023627">
    <property type="entry name" value="Rcmb_RecR"/>
</dbReference>
<dbReference type="InterPro" id="IPR015967">
    <property type="entry name" value="Rcmb_RecR_Znf"/>
</dbReference>
<dbReference type="InterPro" id="IPR006171">
    <property type="entry name" value="TOPRIM_dom"/>
</dbReference>
<dbReference type="InterPro" id="IPR034137">
    <property type="entry name" value="TOPRIM_RecR"/>
</dbReference>
<dbReference type="NCBIfam" id="TIGR00615">
    <property type="entry name" value="recR"/>
    <property type="match status" value="1"/>
</dbReference>
<dbReference type="PANTHER" id="PTHR30446">
    <property type="entry name" value="RECOMBINATION PROTEIN RECR"/>
    <property type="match status" value="1"/>
</dbReference>
<dbReference type="PANTHER" id="PTHR30446:SF0">
    <property type="entry name" value="RECOMBINATION PROTEIN RECR"/>
    <property type="match status" value="1"/>
</dbReference>
<dbReference type="Pfam" id="PF21175">
    <property type="entry name" value="RecR_C"/>
    <property type="match status" value="1"/>
</dbReference>
<dbReference type="Pfam" id="PF21176">
    <property type="entry name" value="RecR_HhH"/>
    <property type="match status" value="1"/>
</dbReference>
<dbReference type="Pfam" id="PF02132">
    <property type="entry name" value="RecR_ZnF"/>
    <property type="match status" value="1"/>
</dbReference>
<dbReference type="Pfam" id="PF13662">
    <property type="entry name" value="Toprim_4"/>
    <property type="match status" value="1"/>
</dbReference>
<dbReference type="SMART" id="SM00493">
    <property type="entry name" value="TOPRIM"/>
    <property type="match status" value="1"/>
</dbReference>
<dbReference type="SUPFAM" id="SSF111304">
    <property type="entry name" value="Recombination protein RecR"/>
    <property type="match status" value="1"/>
</dbReference>
<dbReference type="PROSITE" id="PS01300">
    <property type="entry name" value="RECR"/>
    <property type="match status" value="1"/>
</dbReference>
<dbReference type="PROSITE" id="PS50880">
    <property type="entry name" value="TOPRIM"/>
    <property type="match status" value="1"/>
</dbReference>
<feature type="chain" id="PRO_0000190294" description="Recombination protein RecR">
    <location>
        <begin position="1"/>
        <end position="201"/>
    </location>
</feature>
<feature type="domain" description="Toprim" evidence="1">
    <location>
        <begin position="83"/>
        <end position="178"/>
    </location>
</feature>
<feature type="zinc finger region" description="C4-type" evidence="1">
    <location>
        <begin position="60"/>
        <end position="75"/>
    </location>
</feature>
<sequence length="201" mass="21614">MSKRIAGPEIERLIQLLARVPGLGPRSARRAALHLIKKKEALLVPLGGAMQEAAEKVRICSCCGNVDTSDPCTICTDERRDPATLIVVEDVSDLWALERADTMNVRYHVLGGRLSPLDGIGPDDLNIKGLVERVASGAIKEVILAVNATVEGQTTAHYITDQLSNFDVRVTRLAHGVPVGGELDYLDEGTLAAALRARTTL</sequence>
<gene>
    <name evidence="1" type="primary">recR</name>
    <name type="ordered locus">BMEI1910</name>
</gene>
<proteinExistence type="inferred from homology"/>
<accession>Q8YEG8</accession>
<organism>
    <name type="scientific">Brucella melitensis biotype 1 (strain ATCC 23456 / CCUG 17765 / NCTC 10094 / 16M)</name>
    <dbReference type="NCBI Taxonomy" id="224914"/>
    <lineage>
        <taxon>Bacteria</taxon>
        <taxon>Pseudomonadati</taxon>
        <taxon>Pseudomonadota</taxon>
        <taxon>Alphaproteobacteria</taxon>
        <taxon>Hyphomicrobiales</taxon>
        <taxon>Brucellaceae</taxon>
        <taxon>Brucella/Ochrobactrum group</taxon>
        <taxon>Brucella</taxon>
    </lineage>
</organism>
<keyword id="KW-0227">DNA damage</keyword>
<keyword id="KW-0233">DNA recombination</keyword>
<keyword id="KW-0234">DNA repair</keyword>
<keyword id="KW-0479">Metal-binding</keyword>
<keyword id="KW-0862">Zinc</keyword>
<keyword id="KW-0863">Zinc-finger</keyword>
<comment type="function">
    <text evidence="1">May play a role in DNA repair. It seems to be involved in an RecBC-independent recombinational process of DNA repair. It may act with RecF and RecO.</text>
</comment>
<comment type="similarity">
    <text evidence="1">Belongs to the RecR family.</text>
</comment>
<comment type="sequence caution" evidence="2">
    <conflict type="erroneous initiation">
        <sequence resource="EMBL-CDS" id="AAL53091"/>
    </conflict>
</comment>
<protein>
    <recommendedName>
        <fullName evidence="1">Recombination protein RecR</fullName>
    </recommendedName>
</protein>
<reference key="1">
    <citation type="journal article" date="2002" name="Proc. Natl. Acad. Sci. U.S.A.">
        <title>The genome sequence of the facultative intracellular pathogen Brucella melitensis.</title>
        <authorList>
            <person name="DelVecchio V.G."/>
            <person name="Kapatral V."/>
            <person name="Redkar R.J."/>
            <person name="Patra G."/>
            <person name="Mujer C."/>
            <person name="Los T."/>
            <person name="Ivanova N."/>
            <person name="Anderson I."/>
            <person name="Bhattacharyya A."/>
            <person name="Lykidis A."/>
            <person name="Reznik G."/>
            <person name="Jablonski L."/>
            <person name="Larsen N."/>
            <person name="D'Souza M."/>
            <person name="Bernal A."/>
            <person name="Mazur M."/>
            <person name="Goltsman E."/>
            <person name="Selkov E."/>
            <person name="Elzer P.H."/>
            <person name="Hagius S."/>
            <person name="O'Callaghan D."/>
            <person name="Letesson J.-J."/>
            <person name="Haselkorn R."/>
            <person name="Kyrpides N.C."/>
            <person name="Overbeek R."/>
        </authorList>
    </citation>
    <scope>NUCLEOTIDE SEQUENCE [LARGE SCALE GENOMIC DNA]</scope>
    <source>
        <strain>ATCC 23456 / CCUG 17765 / NCTC 10094 / 16M</strain>
    </source>
</reference>
<name>RECR_BRUME</name>